<name>TKTL2_MOUSE</name>
<sequence>MALARDAKLESDTLQVLQDVANRLRIHSIRATCACSSGHPTSCCSVAEIMAVLFFHTMRYKQADPEHPDNDRFVLSKGHAAPILYAVWVEVGRICESDLLNLRKIHCDLEGHPTPRLSFVDVATGSLGQGLGAACGMAYTGKYFDKASYRVFCLMGDGESSEGSVWEALAFASHYNLDNLVAIFDVNRLGQSGTAPLEHCTAVYEKRCQAFGWNTYVVDGHDVEALCQAFWKAAQVKNKPTALIAKTFKGRGIPNVEDAENWHGKPMPKDRADGIVKLIENRIQTNRNLTPKPPIEDSPRISMSNTKMTSLPVYKLGDMIATREAYGLALAKLGQSNQRVIVLDGDTKNSTFSEVFKKEHPERFIECFIAEQNMVSVALGCATRGRTIAFVSTFAAFLTRAFDQIRMGAISQTNINFVGSHCGVSVGEDGPSQMALEDLAMFRSIPNCTVFYPSDAVSTEHAVYLAANTKGMCFIRTTRPKTAVIYTAEENFVIGQAKVIRQSAVDKVTVIGAGVTLHEALVAAEELSQQGIFIRVIDLFTIKPLDAVTIIQSAKATGGQIITVEDHYREGGIGEAVCAAISREPDIVVRQLAVTEVPRSGKPSELLDMFGISARHIIAAVKDTVMK</sequence>
<gene>
    <name type="primary">Tktl2</name>
</gene>
<feature type="chain" id="PRO_0000285201" description="Transketolase-like protein 2">
    <location>
        <begin position="1"/>
        <end position="627"/>
    </location>
</feature>
<feature type="active site" description="Proton donor" evidence="1">
    <location>
        <position position="371"/>
    </location>
</feature>
<feature type="binding site" evidence="1">
    <location>
        <position position="39"/>
    </location>
    <ligand>
        <name>substrate</name>
    </ligand>
</feature>
<feature type="binding site" evidence="1">
    <location>
        <position position="42"/>
    </location>
    <ligand>
        <name>thiamine diphosphate</name>
        <dbReference type="ChEBI" id="CHEBI:58937"/>
    </ligand>
</feature>
<feature type="binding site" evidence="1">
    <location>
        <position position="79"/>
    </location>
    <ligand>
        <name>thiamine diphosphate</name>
        <dbReference type="ChEBI" id="CHEBI:58937"/>
    </ligand>
</feature>
<feature type="binding site" evidence="1">
    <location>
        <begin position="125"/>
        <end position="127"/>
    </location>
    <ligand>
        <name>thiamine diphosphate</name>
        <dbReference type="ChEBI" id="CHEBI:58937"/>
    </ligand>
</feature>
<feature type="binding site" evidence="1">
    <location>
        <position position="157"/>
    </location>
    <ligand>
        <name>Mg(2+)</name>
        <dbReference type="ChEBI" id="CHEBI:18420"/>
    </ligand>
</feature>
<feature type="binding site" evidence="1">
    <location>
        <position position="158"/>
    </location>
    <ligand>
        <name>thiamine diphosphate</name>
        <dbReference type="ChEBI" id="CHEBI:58937"/>
    </ligand>
</feature>
<feature type="binding site" evidence="1">
    <location>
        <position position="187"/>
    </location>
    <ligand>
        <name>Mg(2+)</name>
        <dbReference type="ChEBI" id="CHEBI:18420"/>
    </ligand>
</feature>
<feature type="binding site" evidence="1">
    <location>
        <position position="187"/>
    </location>
    <ligand>
        <name>thiamine diphosphate</name>
        <dbReference type="ChEBI" id="CHEBI:58937"/>
    </ligand>
</feature>
<feature type="binding site" evidence="1">
    <location>
        <position position="189"/>
    </location>
    <ligand>
        <name>Mg(2+)</name>
        <dbReference type="ChEBI" id="CHEBI:18420"/>
    </ligand>
</feature>
<feature type="binding site" evidence="1">
    <location>
        <position position="249"/>
    </location>
    <ligand>
        <name>thiamine diphosphate</name>
        <dbReference type="ChEBI" id="CHEBI:58937"/>
    </ligand>
</feature>
<feature type="binding site" evidence="1">
    <location>
        <position position="263"/>
    </location>
    <ligand>
        <name>substrate</name>
    </ligand>
</feature>
<feature type="binding site" evidence="1">
    <location>
        <position position="263"/>
    </location>
    <ligand>
        <name>thiamine diphosphate</name>
        <dbReference type="ChEBI" id="CHEBI:58937"/>
    </ligand>
</feature>
<feature type="binding site" evidence="1">
    <location>
        <position position="323"/>
    </location>
    <ligand>
        <name>substrate</name>
    </ligand>
</feature>
<feature type="binding site" evidence="1">
    <location>
        <position position="350"/>
    </location>
    <ligand>
        <name>substrate</name>
    </ligand>
</feature>
<feature type="binding site" evidence="1">
    <location>
        <position position="371"/>
    </location>
    <ligand>
        <name>thiamine diphosphate</name>
        <dbReference type="ChEBI" id="CHEBI:58937"/>
    </ligand>
</feature>
<feature type="binding site" evidence="1">
    <location>
        <position position="397"/>
    </location>
    <ligand>
        <name>thiamine diphosphate</name>
        <dbReference type="ChEBI" id="CHEBI:58937"/>
    </ligand>
</feature>
<feature type="binding site" evidence="1">
    <location>
        <position position="421"/>
    </location>
    <ligand>
        <name>substrate</name>
    </ligand>
</feature>
<feature type="binding site" evidence="1">
    <location>
        <position position="429"/>
    </location>
    <ligand>
        <name>substrate</name>
    </ligand>
</feature>
<feature type="binding site" evidence="1">
    <location>
        <position position="433"/>
    </location>
    <ligand>
        <name>thiamine diphosphate</name>
        <dbReference type="ChEBI" id="CHEBI:58937"/>
    </ligand>
</feature>
<feature type="binding site" evidence="1">
    <location>
        <position position="479"/>
    </location>
    <ligand>
        <name>substrate</name>
    </ligand>
</feature>
<feature type="site" description="Important for catalytic activity" evidence="1">
    <location>
        <position position="39"/>
    </location>
</feature>
<feature type="site" description="Important for catalytic activity" evidence="1">
    <location>
        <position position="263"/>
    </location>
</feature>
<feature type="sequence conflict" description="In Ref. 2; AAI32299/AAI32111." evidence="2" ref="2">
    <original>L</original>
    <variation>F</variation>
    <location>
        <position position="14"/>
    </location>
</feature>
<keyword id="KW-0106">Calcium</keyword>
<keyword id="KW-0460">Magnesium</keyword>
<keyword id="KW-0479">Metal-binding</keyword>
<keyword id="KW-1185">Reference proteome</keyword>
<keyword id="KW-0786">Thiamine pyrophosphate</keyword>
<keyword id="KW-0808">Transferase</keyword>
<evidence type="ECO:0000250" key="1"/>
<evidence type="ECO:0000305" key="2"/>
<proteinExistence type="evidence at protein level"/>
<protein>
    <recommendedName>
        <fullName>Transketolase-like protein 2</fullName>
        <ecNumber>2.2.1.1</ecNumber>
    </recommendedName>
</protein>
<organism>
    <name type="scientific">Mus musculus</name>
    <name type="common">Mouse</name>
    <dbReference type="NCBI Taxonomy" id="10090"/>
    <lineage>
        <taxon>Eukaryota</taxon>
        <taxon>Metazoa</taxon>
        <taxon>Chordata</taxon>
        <taxon>Craniata</taxon>
        <taxon>Vertebrata</taxon>
        <taxon>Euteleostomi</taxon>
        <taxon>Mammalia</taxon>
        <taxon>Eutheria</taxon>
        <taxon>Euarchontoglires</taxon>
        <taxon>Glires</taxon>
        <taxon>Rodentia</taxon>
        <taxon>Myomorpha</taxon>
        <taxon>Muroidea</taxon>
        <taxon>Muridae</taxon>
        <taxon>Murinae</taxon>
        <taxon>Mus</taxon>
        <taxon>Mus</taxon>
    </lineage>
</organism>
<dbReference type="EC" id="2.2.1.1"/>
<dbReference type="EMBL" id="AK016603">
    <property type="protein sequence ID" value="BAB30335.1"/>
    <property type="molecule type" value="mRNA"/>
</dbReference>
<dbReference type="EMBL" id="BC132110">
    <property type="protein sequence ID" value="AAI32111.1"/>
    <property type="molecule type" value="mRNA"/>
</dbReference>
<dbReference type="EMBL" id="BC132298">
    <property type="protein sequence ID" value="AAI32299.1"/>
    <property type="molecule type" value="mRNA"/>
</dbReference>
<dbReference type="CCDS" id="CCDS22334.1"/>
<dbReference type="RefSeq" id="NP_001258503.1">
    <property type="nucleotide sequence ID" value="NM_001271574.1"/>
</dbReference>
<dbReference type="RefSeq" id="NP_083203.2">
    <property type="nucleotide sequence ID" value="NM_028927.3"/>
</dbReference>
<dbReference type="SMR" id="Q9D4D4"/>
<dbReference type="BioGRID" id="216735">
    <property type="interactions" value="3"/>
</dbReference>
<dbReference type="FunCoup" id="Q9D4D4">
    <property type="interactions" value="593"/>
</dbReference>
<dbReference type="STRING" id="10090.ENSMUSP00000138388"/>
<dbReference type="iPTMnet" id="Q9D4D4"/>
<dbReference type="PhosphoSitePlus" id="Q9D4D4"/>
<dbReference type="jPOST" id="Q9D4D4"/>
<dbReference type="PaxDb" id="10090-ENSMUSP00000002025"/>
<dbReference type="PeptideAtlas" id="Q9D4D4"/>
<dbReference type="ProteomicsDB" id="258890"/>
<dbReference type="GeneID" id="74419"/>
<dbReference type="KEGG" id="mmu:74419"/>
<dbReference type="UCSC" id="uc009lvq.2">
    <property type="organism name" value="mouse"/>
</dbReference>
<dbReference type="AGR" id="MGI:1921669"/>
<dbReference type="CTD" id="84076"/>
<dbReference type="MGI" id="MGI:1921669">
    <property type="gene designation" value="Tktl2"/>
</dbReference>
<dbReference type="eggNOG" id="KOG0523">
    <property type="taxonomic scope" value="Eukaryota"/>
</dbReference>
<dbReference type="InParanoid" id="Q9D4D4"/>
<dbReference type="OrthoDB" id="10267175at2759"/>
<dbReference type="PhylomeDB" id="Q9D4D4"/>
<dbReference type="TreeFam" id="TF313097"/>
<dbReference type="BioGRID-ORCS" id="74419">
    <property type="hits" value="3 hits in 78 CRISPR screens"/>
</dbReference>
<dbReference type="PRO" id="PR:Q9D4D4"/>
<dbReference type="Proteomes" id="UP000000589">
    <property type="component" value="Unplaced"/>
</dbReference>
<dbReference type="RNAct" id="Q9D4D4">
    <property type="molecule type" value="protein"/>
</dbReference>
<dbReference type="GO" id="GO:0005737">
    <property type="term" value="C:cytoplasm"/>
    <property type="evidence" value="ECO:0007669"/>
    <property type="project" value="UniProtKB-ARBA"/>
</dbReference>
<dbReference type="GO" id="GO:0046872">
    <property type="term" value="F:metal ion binding"/>
    <property type="evidence" value="ECO:0007669"/>
    <property type="project" value="UniProtKB-KW"/>
</dbReference>
<dbReference type="GO" id="GO:0004802">
    <property type="term" value="F:transketolase activity"/>
    <property type="evidence" value="ECO:0007669"/>
    <property type="project" value="UniProtKB-EC"/>
</dbReference>
<dbReference type="CDD" id="cd07033">
    <property type="entry name" value="TPP_PYR_DXS_TK_like"/>
    <property type="match status" value="1"/>
</dbReference>
<dbReference type="CDD" id="cd02012">
    <property type="entry name" value="TPP_TK"/>
    <property type="match status" value="1"/>
</dbReference>
<dbReference type="FunFam" id="3.40.50.970:FF:000028">
    <property type="entry name" value="Transketolase isoform 1"/>
    <property type="match status" value="1"/>
</dbReference>
<dbReference type="FunFam" id="3.40.50.970:FF:000033">
    <property type="entry name" value="Transketolase isoform 1"/>
    <property type="match status" value="1"/>
</dbReference>
<dbReference type="FunFam" id="3.40.50.920:FF:000008">
    <property type="entry name" value="transketolase isoform X2"/>
    <property type="match status" value="1"/>
</dbReference>
<dbReference type="Gene3D" id="3.40.50.920">
    <property type="match status" value="1"/>
</dbReference>
<dbReference type="Gene3D" id="3.40.50.970">
    <property type="match status" value="2"/>
</dbReference>
<dbReference type="InterPro" id="IPR029061">
    <property type="entry name" value="THDP-binding"/>
</dbReference>
<dbReference type="InterPro" id="IPR009014">
    <property type="entry name" value="Transketo_C/PFOR_II"/>
</dbReference>
<dbReference type="InterPro" id="IPR051424">
    <property type="entry name" value="Transketolase-like"/>
</dbReference>
<dbReference type="InterPro" id="IPR005475">
    <property type="entry name" value="Transketolase-like_Pyr-bd"/>
</dbReference>
<dbReference type="InterPro" id="IPR020826">
    <property type="entry name" value="Transketolase_BS"/>
</dbReference>
<dbReference type="InterPro" id="IPR033248">
    <property type="entry name" value="Transketolase_C"/>
</dbReference>
<dbReference type="InterPro" id="IPR005474">
    <property type="entry name" value="Transketolase_N"/>
</dbReference>
<dbReference type="NCBIfam" id="NF004559">
    <property type="entry name" value="PRK05899.2-5"/>
    <property type="match status" value="1"/>
</dbReference>
<dbReference type="PANTHER" id="PTHR43195">
    <property type="entry name" value="TRANSKETOLASE"/>
    <property type="match status" value="1"/>
</dbReference>
<dbReference type="PANTHER" id="PTHR43195:SF4">
    <property type="entry name" value="TRANSKETOLASE-LIKE PROTEIN 2"/>
    <property type="match status" value="1"/>
</dbReference>
<dbReference type="Pfam" id="PF02779">
    <property type="entry name" value="Transket_pyr"/>
    <property type="match status" value="1"/>
</dbReference>
<dbReference type="Pfam" id="PF02780">
    <property type="entry name" value="Transketolase_C"/>
    <property type="match status" value="1"/>
</dbReference>
<dbReference type="Pfam" id="PF00456">
    <property type="entry name" value="Transketolase_N"/>
    <property type="match status" value="1"/>
</dbReference>
<dbReference type="SMART" id="SM00861">
    <property type="entry name" value="Transket_pyr"/>
    <property type="match status" value="1"/>
</dbReference>
<dbReference type="SUPFAM" id="SSF52518">
    <property type="entry name" value="Thiamin diphosphate-binding fold (THDP-binding)"/>
    <property type="match status" value="2"/>
</dbReference>
<dbReference type="SUPFAM" id="SSF52922">
    <property type="entry name" value="TK C-terminal domain-like"/>
    <property type="match status" value="1"/>
</dbReference>
<dbReference type="PROSITE" id="PS00802">
    <property type="entry name" value="TRANSKETOLASE_2"/>
    <property type="match status" value="1"/>
</dbReference>
<reference key="1">
    <citation type="journal article" date="2005" name="Science">
        <title>The transcriptional landscape of the mammalian genome.</title>
        <authorList>
            <person name="Carninci P."/>
            <person name="Kasukawa T."/>
            <person name="Katayama S."/>
            <person name="Gough J."/>
            <person name="Frith M.C."/>
            <person name="Maeda N."/>
            <person name="Oyama R."/>
            <person name="Ravasi T."/>
            <person name="Lenhard B."/>
            <person name="Wells C."/>
            <person name="Kodzius R."/>
            <person name="Shimokawa K."/>
            <person name="Bajic V.B."/>
            <person name="Brenner S.E."/>
            <person name="Batalov S."/>
            <person name="Forrest A.R."/>
            <person name="Zavolan M."/>
            <person name="Davis M.J."/>
            <person name="Wilming L.G."/>
            <person name="Aidinis V."/>
            <person name="Allen J.E."/>
            <person name="Ambesi-Impiombato A."/>
            <person name="Apweiler R."/>
            <person name="Aturaliya R.N."/>
            <person name="Bailey T.L."/>
            <person name="Bansal M."/>
            <person name="Baxter L."/>
            <person name="Beisel K.W."/>
            <person name="Bersano T."/>
            <person name="Bono H."/>
            <person name="Chalk A.M."/>
            <person name="Chiu K.P."/>
            <person name="Choudhary V."/>
            <person name="Christoffels A."/>
            <person name="Clutterbuck D.R."/>
            <person name="Crowe M.L."/>
            <person name="Dalla E."/>
            <person name="Dalrymple B.P."/>
            <person name="de Bono B."/>
            <person name="Della Gatta G."/>
            <person name="di Bernardo D."/>
            <person name="Down T."/>
            <person name="Engstrom P."/>
            <person name="Fagiolini M."/>
            <person name="Faulkner G."/>
            <person name="Fletcher C.F."/>
            <person name="Fukushima T."/>
            <person name="Furuno M."/>
            <person name="Futaki S."/>
            <person name="Gariboldi M."/>
            <person name="Georgii-Hemming P."/>
            <person name="Gingeras T.R."/>
            <person name="Gojobori T."/>
            <person name="Green R.E."/>
            <person name="Gustincich S."/>
            <person name="Harbers M."/>
            <person name="Hayashi Y."/>
            <person name="Hensch T.K."/>
            <person name="Hirokawa N."/>
            <person name="Hill D."/>
            <person name="Huminiecki L."/>
            <person name="Iacono M."/>
            <person name="Ikeo K."/>
            <person name="Iwama A."/>
            <person name="Ishikawa T."/>
            <person name="Jakt M."/>
            <person name="Kanapin A."/>
            <person name="Katoh M."/>
            <person name="Kawasawa Y."/>
            <person name="Kelso J."/>
            <person name="Kitamura H."/>
            <person name="Kitano H."/>
            <person name="Kollias G."/>
            <person name="Krishnan S.P."/>
            <person name="Kruger A."/>
            <person name="Kummerfeld S.K."/>
            <person name="Kurochkin I.V."/>
            <person name="Lareau L.F."/>
            <person name="Lazarevic D."/>
            <person name="Lipovich L."/>
            <person name="Liu J."/>
            <person name="Liuni S."/>
            <person name="McWilliam S."/>
            <person name="Madan Babu M."/>
            <person name="Madera M."/>
            <person name="Marchionni L."/>
            <person name="Matsuda H."/>
            <person name="Matsuzawa S."/>
            <person name="Miki H."/>
            <person name="Mignone F."/>
            <person name="Miyake S."/>
            <person name="Morris K."/>
            <person name="Mottagui-Tabar S."/>
            <person name="Mulder N."/>
            <person name="Nakano N."/>
            <person name="Nakauchi H."/>
            <person name="Ng P."/>
            <person name="Nilsson R."/>
            <person name="Nishiguchi S."/>
            <person name="Nishikawa S."/>
            <person name="Nori F."/>
            <person name="Ohara O."/>
            <person name="Okazaki Y."/>
            <person name="Orlando V."/>
            <person name="Pang K.C."/>
            <person name="Pavan W.J."/>
            <person name="Pavesi G."/>
            <person name="Pesole G."/>
            <person name="Petrovsky N."/>
            <person name="Piazza S."/>
            <person name="Reed J."/>
            <person name="Reid J.F."/>
            <person name="Ring B.Z."/>
            <person name="Ringwald M."/>
            <person name="Rost B."/>
            <person name="Ruan Y."/>
            <person name="Salzberg S.L."/>
            <person name="Sandelin A."/>
            <person name="Schneider C."/>
            <person name="Schoenbach C."/>
            <person name="Sekiguchi K."/>
            <person name="Semple C.A."/>
            <person name="Seno S."/>
            <person name="Sessa L."/>
            <person name="Sheng Y."/>
            <person name="Shibata Y."/>
            <person name="Shimada H."/>
            <person name="Shimada K."/>
            <person name="Silva D."/>
            <person name="Sinclair B."/>
            <person name="Sperling S."/>
            <person name="Stupka E."/>
            <person name="Sugiura K."/>
            <person name="Sultana R."/>
            <person name="Takenaka Y."/>
            <person name="Taki K."/>
            <person name="Tammoja K."/>
            <person name="Tan S.L."/>
            <person name="Tang S."/>
            <person name="Taylor M.S."/>
            <person name="Tegner J."/>
            <person name="Teichmann S.A."/>
            <person name="Ueda H.R."/>
            <person name="van Nimwegen E."/>
            <person name="Verardo R."/>
            <person name="Wei C.L."/>
            <person name="Yagi K."/>
            <person name="Yamanishi H."/>
            <person name="Zabarovsky E."/>
            <person name="Zhu S."/>
            <person name="Zimmer A."/>
            <person name="Hide W."/>
            <person name="Bult C."/>
            <person name="Grimmond S.M."/>
            <person name="Teasdale R.D."/>
            <person name="Liu E.T."/>
            <person name="Brusic V."/>
            <person name="Quackenbush J."/>
            <person name="Wahlestedt C."/>
            <person name="Mattick J.S."/>
            <person name="Hume D.A."/>
            <person name="Kai C."/>
            <person name="Sasaki D."/>
            <person name="Tomaru Y."/>
            <person name="Fukuda S."/>
            <person name="Kanamori-Katayama M."/>
            <person name="Suzuki M."/>
            <person name="Aoki J."/>
            <person name="Arakawa T."/>
            <person name="Iida J."/>
            <person name="Imamura K."/>
            <person name="Itoh M."/>
            <person name="Kato T."/>
            <person name="Kawaji H."/>
            <person name="Kawagashira N."/>
            <person name="Kawashima T."/>
            <person name="Kojima M."/>
            <person name="Kondo S."/>
            <person name="Konno H."/>
            <person name="Nakano K."/>
            <person name="Ninomiya N."/>
            <person name="Nishio T."/>
            <person name="Okada M."/>
            <person name="Plessy C."/>
            <person name="Shibata K."/>
            <person name="Shiraki T."/>
            <person name="Suzuki S."/>
            <person name="Tagami M."/>
            <person name="Waki K."/>
            <person name="Watahiki A."/>
            <person name="Okamura-Oho Y."/>
            <person name="Suzuki H."/>
            <person name="Kawai J."/>
            <person name="Hayashizaki Y."/>
        </authorList>
    </citation>
    <scope>NUCLEOTIDE SEQUENCE [LARGE SCALE MRNA]</scope>
    <source>
        <strain>C57BL/6J</strain>
        <tissue>Testis</tissue>
    </source>
</reference>
<reference key="2">
    <citation type="journal article" date="2004" name="Genome Res.">
        <title>The status, quality, and expansion of the NIH full-length cDNA project: the Mammalian Gene Collection (MGC).</title>
        <authorList>
            <consortium name="The MGC Project Team"/>
        </authorList>
    </citation>
    <scope>NUCLEOTIDE SEQUENCE [LARGE SCALE MRNA]</scope>
    <source>
        <tissue>Brain</tissue>
    </source>
</reference>
<reference key="3">
    <citation type="journal article" date="2010" name="Cell">
        <title>A tissue-specific atlas of mouse protein phosphorylation and expression.</title>
        <authorList>
            <person name="Huttlin E.L."/>
            <person name="Jedrychowski M.P."/>
            <person name="Elias J.E."/>
            <person name="Goswami T."/>
            <person name="Rad R."/>
            <person name="Beausoleil S.A."/>
            <person name="Villen J."/>
            <person name="Haas W."/>
            <person name="Sowa M.E."/>
            <person name="Gygi S.P."/>
        </authorList>
    </citation>
    <scope>IDENTIFICATION BY MASS SPECTROMETRY [LARGE SCALE ANALYSIS]</scope>
    <source>
        <tissue>Testis</tissue>
    </source>
</reference>
<accession>Q9D4D4</accession>
<accession>A2RSH3</accession>
<comment type="function">
    <text evidence="1">Plays an essential role in total transketolase activity and cell proliferation in cancer cells; after transfection with anti-TKTL1 siRNA, total transketolase activity dramatically decreases and proliferation was significantly inhibited in cancer cells. Plays a pivotal role in carcinogenesis (By similarity).</text>
</comment>
<comment type="catalytic activity">
    <reaction>
        <text>D-sedoheptulose 7-phosphate + D-glyceraldehyde 3-phosphate = aldehydo-D-ribose 5-phosphate + D-xylulose 5-phosphate</text>
        <dbReference type="Rhea" id="RHEA:10508"/>
        <dbReference type="ChEBI" id="CHEBI:57483"/>
        <dbReference type="ChEBI" id="CHEBI:57737"/>
        <dbReference type="ChEBI" id="CHEBI:58273"/>
        <dbReference type="ChEBI" id="CHEBI:59776"/>
        <dbReference type="EC" id="2.2.1.1"/>
    </reaction>
</comment>
<comment type="cofactor">
    <cofactor evidence="1">
        <name>Mg(2+)</name>
        <dbReference type="ChEBI" id="CHEBI:18420"/>
    </cofactor>
    <cofactor evidence="1">
        <name>Ca(2+)</name>
        <dbReference type="ChEBI" id="CHEBI:29108"/>
    </cofactor>
    <cofactor evidence="1">
        <name>Mn(2+)</name>
        <dbReference type="ChEBI" id="CHEBI:29035"/>
    </cofactor>
    <cofactor evidence="1">
        <name>Co(2+)</name>
        <dbReference type="ChEBI" id="CHEBI:48828"/>
    </cofactor>
    <text evidence="1">Binds 1 Mg(2+) ion per subunit. Can also utilize other divalent metal cations, such as Ca(2+), Mn(2+) and Co(2+).</text>
</comment>
<comment type="cofactor">
    <cofactor evidence="1">
        <name>thiamine diphosphate</name>
        <dbReference type="ChEBI" id="CHEBI:58937"/>
    </cofactor>
    <text evidence="1">Binds 1 thiamine pyrophosphate per subunit.</text>
</comment>
<comment type="subunit">
    <text evidence="1">Homodimer.</text>
</comment>
<comment type="similarity">
    <text evidence="2">Belongs to the transketolase family.</text>
</comment>